<protein>
    <recommendedName>
        <fullName evidence="6">Small polypeptide ROTUNDIFOLIA LIKE 3</fullName>
        <shortName evidence="6">OsRTFL3</shortName>
        <shortName evidence="6">Small polypeptide ROT-FOUR-LIKE 3</shortName>
    </recommendedName>
</protein>
<gene>
    <name evidence="6" type="primary">RTFL3</name>
    <name evidence="10" type="ordered locus">Os01g0972300</name>
    <name evidence="12" type="ORF">OsJ_04932</name>
    <name evidence="11" type="ORF">OSNPB_010972300</name>
    <name evidence="8" type="ORF">P0518C01.28</name>
    <name evidence="9" type="ORF">P0698H10.2</name>
</gene>
<dbReference type="EMBL" id="AP003277">
    <property type="protein sequence ID" value="BAD87367.1"/>
    <property type="molecule type" value="Genomic_DNA"/>
</dbReference>
<dbReference type="EMBL" id="AP003298">
    <property type="protein sequence ID" value="BAD87411.1"/>
    <property type="molecule type" value="Genomic_DNA"/>
</dbReference>
<dbReference type="EMBL" id="AP008207">
    <property type="protein sequence ID" value="BAF07455.2"/>
    <property type="molecule type" value="Genomic_DNA"/>
</dbReference>
<dbReference type="EMBL" id="AP014957">
    <property type="protein sequence ID" value="BAS76437.1"/>
    <property type="molecule type" value="Genomic_DNA"/>
</dbReference>
<dbReference type="EMBL" id="CM000138">
    <property type="protein sequence ID" value="EEE56091.1"/>
    <property type="molecule type" value="Genomic_DNA"/>
</dbReference>
<dbReference type="RefSeq" id="NP_001384879.1">
    <property type="nucleotide sequence ID" value="NM_001397950.1"/>
</dbReference>
<dbReference type="RefSeq" id="XP_015645260.1">
    <property type="nucleotide sequence ID" value="XM_015789774.1"/>
</dbReference>
<dbReference type="SMR" id="A0A5S6RB44"/>
<dbReference type="FunCoup" id="A0A5S6RB44">
    <property type="interactions" value="303"/>
</dbReference>
<dbReference type="GlyCosmos" id="A0A5S6RB44">
    <property type="glycosylation" value="3 sites, No reported glycans"/>
</dbReference>
<dbReference type="PaxDb" id="39947-Q5JM96"/>
<dbReference type="EnsemblPlants" id="Os01t0972300-01">
    <property type="protein sequence ID" value="Os01t0972300-01"/>
    <property type="gene ID" value="Os01g0972300"/>
</dbReference>
<dbReference type="GeneID" id="4326395"/>
<dbReference type="Gramene" id="Os01t0972300-01">
    <property type="protein sequence ID" value="Os01t0972300-01"/>
    <property type="gene ID" value="Os01g0972300"/>
</dbReference>
<dbReference type="KEGG" id="dosa:Os01g0972300"/>
<dbReference type="eggNOG" id="ENOG502S3XH">
    <property type="taxonomic scope" value="Eukaryota"/>
</dbReference>
<dbReference type="HOGENOM" id="CLU_150897_0_0_1"/>
<dbReference type="InParanoid" id="A0A5S6RB44"/>
<dbReference type="OMA" id="CAISTCT"/>
<dbReference type="OrthoDB" id="678750at2759"/>
<dbReference type="Proteomes" id="UP000000763">
    <property type="component" value="Chromosome 1"/>
</dbReference>
<dbReference type="Proteomes" id="UP000007752">
    <property type="component" value="Chromosome 1"/>
</dbReference>
<dbReference type="Proteomes" id="UP000059680">
    <property type="component" value="Chromosome 1"/>
</dbReference>
<dbReference type="GO" id="GO:0005886">
    <property type="term" value="C:plasma membrane"/>
    <property type="evidence" value="ECO:0007669"/>
    <property type="project" value="UniProtKB-SubCell"/>
</dbReference>
<dbReference type="GO" id="GO:0008285">
    <property type="term" value="P:negative regulation of cell population proliferation"/>
    <property type="evidence" value="ECO:0000315"/>
    <property type="project" value="UniProtKB"/>
</dbReference>
<dbReference type="GO" id="GO:0042127">
    <property type="term" value="P:regulation of cell population proliferation"/>
    <property type="evidence" value="ECO:0000315"/>
    <property type="project" value="UniProtKB"/>
</dbReference>
<dbReference type="GO" id="GO:0048367">
    <property type="term" value="P:shoot system development"/>
    <property type="evidence" value="ECO:0000315"/>
    <property type="project" value="UniProtKB"/>
</dbReference>
<dbReference type="InterPro" id="IPR012552">
    <property type="entry name" value="DVL"/>
</dbReference>
<dbReference type="InterPro" id="IPR051525">
    <property type="entry name" value="DVL_RTFL_regulatory"/>
</dbReference>
<dbReference type="PANTHER" id="PTHR33102">
    <property type="entry name" value="DVL19-RELATED-RELATED"/>
    <property type="match status" value="1"/>
</dbReference>
<dbReference type="Pfam" id="PF08137">
    <property type="entry name" value="DVL"/>
    <property type="match status" value="1"/>
</dbReference>
<accession>A0A5S6RB44</accession>
<accession>Q0JFM3</accession>
<accession>Q5JM96</accession>
<name>RTFL3_ORYSJ</name>
<keyword id="KW-1003">Cell membrane</keyword>
<keyword id="KW-0217">Developmental protein</keyword>
<keyword id="KW-0325">Glycoprotein</keyword>
<keyword id="KW-0472">Membrane</keyword>
<keyword id="KW-1185">Reference proteome</keyword>
<keyword id="KW-0812">Transmembrane</keyword>
<keyword id="KW-1133">Transmembrane helix</keyword>
<reference key="1">
    <citation type="journal article" date="2002" name="Nature">
        <title>The genome sequence and structure of rice chromosome 1.</title>
        <authorList>
            <person name="Sasaki T."/>
            <person name="Matsumoto T."/>
            <person name="Yamamoto K."/>
            <person name="Sakata K."/>
            <person name="Baba T."/>
            <person name="Katayose Y."/>
            <person name="Wu J."/>
            <person name="Niimura Y."/>
            <person name="Cheng Z."/>
            <person name="Nagamura Y."/>
            <person name="Antonio B.A."/>
            <person name="Kanamori H."/>
            <person name="Hosokawa S."/>
            <person name="Masukawa M."/>
            <person name="Arikawa K."/>
            <person name="Chiden Y."/>
            <person name="Hayashi M."/>
            <person name="Okamoto M."/>
            <person name="Ando T."/>
            <person name="Aoki H."/>
            <person name="Arita K."/>
            <person name="Hamada M."/>
            <person name="Harada C."/>
            <person name="Hijishita S."/>
            <person name="Honda M."/>
            <person name="Ichikawa Y."/>
            <person name="Idonuma A."/>
            <person name="Iijima M."/>
            <person name="Ikeda M."/>
            <person name="Ikeno M."/>
            <person name="Ito S."/>
            <person name="Ito T."/>
            <person name="Ito Y."/>
            <person name="Ito Y."/>
            <person name="Iwabuchi A."/>
            <person name="Kamiya K."/>
            <person name="Karasawa W."/>
            <person name="Katagiri S."/>
            <person name="Kikuta A."/>
            <person name="Kobayashi N."/>
            <person name="Kono I."/>
            <person name="Machita K."/>
            <person name="Maehara T."/>
            <person name="Mizuno H."/>
            <person name="Mizubayashi T."/>
            <person name="Mukai Y."/>
            <person name="Nagasaki H."/>
            <person name="Nakashima M."/>
            <person name="Nakama Y."/>
            <person name="Nakamichi Y."/>
            <person name="Nakamura M."/>
            <person name="Namiki N."/>
            <person name="Negishi M."/>
            <person name="Ohta I."/>
            <person name="Ono N."/>
            <person name="Saji S."/>
            <person name="Sakai K."/>
            <person name="Shibata M."/>
            <person name="Shimokawa T."/>
            <person name="Shomura A."/>
            <person name="Song J."/>
            <person name="Takazaki Y."/>
            <person name="Terasawa K."/>
            <person name="Tsuji K."/>
            <person name="Waki K."/>
            <person name="Yamagata H."/>
            <person name="Yamane H."/>
            <person name="Yoshiki S."/>
            <person name="Yoshihara R."/>
            <person name="Yukawa K."/>
            <person name="Zhong H."/>
            <person name="Iwama H."/>
            <person name="Endo T."/>
            <person name="Ito H."/>
            <person name="Hahn J.H."/>
            <person name="Kim H.-I."/>
            <person name="Eun M.-Y."/>
            <person name="Yano M."/>
            <person name="Jiang J."/>
            <person name="Gojobori T."/>
        </authorList>
    </citation>
    <scope>NUCLEOTIDE SEQUENCE [LARGE SCALE GENOMIC DNA]</scope>
    <source>
        <strain>cv. Nipponbare</strain>
    </source>
</reference>
<reference key="2">
    <citation type="journal article" date="2005" name="Nature">
        <title>The map-based sequence of the rice genome.</title>
        <authorList>
            <consortium name="International rice genome sequencing project (IRGSP)"/>
        </authorList>
    </citation>
    <scope>NUCLEOTIDE SEQUENCE [LARGE SCALE GENOMIC DNA]</scope>
    <source>
        <strain>cv. Nipponbare</strain>
    </source>
</reference>
<reference key="3">
    <citation type="journal article" date="2008" name="Nucleic Acids Res.">
        <title>The rice annotation project database (RAP-DB): 2008 update.</title>
        <authorList>
            <consortium name="The rice annotation project (RAP)"/>
        </authorList>
    </citation>
    <scope>GENOME REANNOTATION</scope>
    <source>
        <strain>cv. Nipponbare</strain>
    </source>
</reference>
<reference key="4">
    <citation type="journal article" date="2013" name="Rice">
        <title>Improvement of the Oryza sativa Nipponbare reference genome using next generation sequence and optical map data.</title>
        <authorList>
            <person name="Kawahara Y."/>
            <person name="de la Bastide M."/>
            <person name="Hamilton J.P."/>
            <person name="Kanamori H."/>
            <person name="McCombie W.R."/>
            <person name="Ouyang S."/>
            <person name="Schwartz D.C."/>
            <person name="Tanaka T."/>
            <person name="Wu J."/>
            <person name="Zhou S."/>
            <person name="Childs K.L."/>
            <person name="Davidson R.M."/>
            <person name="Lin H."/>
            <person name="Quesada-Ocampo L."/>
            <person name="Vaillancourt B."/>
            <person name="Sakai H."/>
            <person name="Lee S.S."/>
            <person name="Kim J."/>
            <person name="Numa H."/>
            <person name="Itoh T."/>
            <person name="Buell C.R."/>
            <person name="Matsumoto T."/>
        </authorList>
    </citation>
    <scope>GENOME REANNOTATION</scope>
    <source>
        <strain>cv. Nipponbare</strain>
    </source>
</reference>
<reference key="5">
    <citation type="journal article" date="2005" name="PLoS Biol.">
        <title>The genomes of Oryza sativa: a history of duplications.</title>
        <authorList>
            <person name="Yu J."/>
            <person name="Wang J."/>
            <person name="Lin W."/>
            <person name="Li S."/>
            <person name="Li H."/>
            <person name="Zhou J."/>
            <person name="Ni P."/>
            <person name="Dong W."/>
            <person name="Hu S."/>
            <person name="Zeng C."/>
            <person name="Zhang J."/>
            <person name="Zhang Y."/>
            <person name="Li R."/>
            <person name="Xu Z."/>
            <person name="Li S."/>
            <person name="Li X."/>
            <person name="Zheng H."/>
            <person name="Cong L."/>
            <person name="Lin L."/>
            <person name="Yin J."/>
            <person name="Geng J."/>
            <person name="Li G."/>
            <person name="Shi J."/>
            <person name="Liu J."/>
            <person name="Lv H."/>
            <person name="Li J."/>
            <person name="Wang J."/>
            <person name="Deng Y."/>
            <person name="Ran L."/>
            <person name="Shi X."/>
            <person name="Wang X."/>
            <person name="Wu Q."/>
            <person name="Li C."/>
            <person name="Ren X."/>
            <person name="Wang J."/>
            <person name="Wang X."/>
            <person name="Li D."/>
            <person name="Liu D."/>
            <person name="Zhang X."/>
            <person name="Ji Z."/>
            <person name="Zhao W."/>
            <person name="Sun Y."/>
            <person name="Zhang Z."/>
            <person name="Bao J."/>
            <person name="Han Y."/>
            <person name="Dong L."/>
            <person name="Ji J."/>
            <person name="Chen P."/>
            <person name="Wu S."/>
            <person name="Liu J."/>
            <person name="Xiao Y."/>
            <person name="Bu D."/>
            <person name="Tan J."/>
            <person name="Yang L."/>
            <person name="Ye C."/>
            <person name="Zhang J."/>
            <person name="Xu J."/>
            <person name="Zhou Y."/>
            <person name="Yu Y."/>
            <person name="Zhang B."/>
            <person name="Zhuang S."/>
            <person name="Wei H."/>
            <person name="Liu B."/>
            <person name="Lei M."/>
            <person name="Yu H."/>
            <person name="Li Y."/>
            <person name="Xu H."/>
            <person name="Wei S."/>
            <person name="He X."/>
            <person name="Fang L."/>
            <person name="Zhang Z."/>
            <person name="Zhang Y."/>
            <person name="Huang X."/>
            <person name="Su Z."/>
            <person name="Tong W."/>
            <person name="Li J."/>
            <person name="Tong Z."/>
            <person name="Li S."/>
            <person name="Ye J."/>
            <person name="Wang L."/>
            <person name="Fang L."/>
            <person name="Lei T."/>
            <person name="Chen C.-S."/>
            <person name="Chen H.-C."/>
            <person name="Xu Z."/>
            <person name="Li H."/>
            <person name="Huang H."/>
            <person name="Zhang F."/>
            <person name="Xu H."/>
            <person name="Li N."/>
            <person name="Zhao C."/>
            <person name="Li S."/>
            <person name="Dong L."/>
            <person name="Huang Y."/>
            <person name="Li L."/>
            <person name="Xi Y."/>
            <person name="Qi Q."/>
            <person name="Li W."/>
            <person name="Zhang B."/>
            <person name="Hu W."/>
            <person name="Zhang Y."/>
            <person name="Tian X."/>
            <person name="Jiao Y."/>
            <person name="Liang X."/>
            <person name="Jin J."/>
            <person name="Gao L."/>
            <person name="Zheng W."/>
            <person name="Hao B."/>
            <person name="Liu S.-M."/>
            <person name="Wang W."/>
            <person name="Yuan L."/>
            <person name="Cao M."/>
            <person name="McDermott J."/>
            <person name="Samudrala R."/>
            <person name="Wang J."/>
            <person name="Wong G.K.-S."/>
            <person name="Yang H."/>
        </authorList>
    </citation>
    <scope>NUCLEOTIDE SEQUENCE [LARGE SCALE GENOMIC DNA]</scope>
    <source>
        <strain>cv. Nipponbare</strain>
    </source>
</reference>
<reference key="6">
    <citation type="journal article" date="2004" name="Plant J.">
        <title>Overexpression of a novel small peptide ROTUNDIFOLIA4 decreases cell proliferation and alters leaf shape in Arabidopsis thaliana.</title>
        <authorList>
            <person name="Narita N.N."/>
            <person name="Moore S."/>
            <person name="Horiguchi G."/>
            <person name="Kubo M."/>
            <person name="Demura T."/>
            <person name="Fukuda H."/>
            <person name="Goodrich J."/>
            <person name="Tsukaya H."/>
        </authorList>
    </citation>
    <scope>GENE FAMILY</scope>
</reference>
<reference key="7">
    <citation type="journal article" date="2015" name="J. Plant Res.">
        <title>Comparative analysis of the RTFL peptide family on the control of plant organogenesis.</title>
        <authorList>
            <person name="Guo P."/>
            <person name="Yoshimura A."/>
            <person name="Ishikawa N."/>
            <person name="Yamaguchi T."/>
            <person name="Guo Y."/>
            <person name="Tsukaya H."/>
        </authorList>
    </citation>
    <scope>FUNCTION</scope>
    <scope>REVIEW</scope>
    <scope>GENE FAMILY</scope>
    <scope>NOMENCLATURE</scope>
    <source>
        <strain>cv. Taichung 65</strain>
    </source>
</reference>
<evidence type="ECO:0000250" key="1">
    <source>
        <dbReference type="UniProtKB" id="Q7XXN8"/>
    </source>
</evidence>
<evidence type="ECO:0000255" key="2"/>
<evidence type="ECO:0000255" key="3">
    <source>
        <dbReference type="PROSITE-ProRule" id="PRU00498"/>
    </source>
</evidence>
<evidence type="ECO:0000256" key="4">
    <source>
        <dbReference type="SAM" id="MobiDB-lite"/>
    </source>
</evidence>
<evidence type="ECO:0000269" key="5">
    <source>
    </source>
</evidence>
<evidence type="ECO:0000303" key="6">
    <source>
    </source>
</evidence>
<evidence type="ECO:0000305" key="7"/>
<evidence type="ECO:0000312" key="8">
    <source>
        <dbReference type="EMBL" id="BAD87367.1"/>
    </source>
</evidence>
<evidence type="ECO:0000312" key="9">
    <source>
        <dbReference type="EMBL" id="BAD87411.1"/>
    </source>
</evidence>
<evidence type="ECO:0000312" key="10">
    <source>
        <dbReference type="EMBL" id="BAF07455.2"/>
    </source>
</evidence>
<evidence type="ECO:0000312" key="11">
    <source>
        <dbReference type="EMBL" id="BAS76437.1"/>
    </source>
</evidence>
<evidence type="ECO:0000312" key="12">
    <source>
        <dbReference type="EMBL" id="EEE56091.1"/>
    </source>
</evidence>
<sequence length="124" mass="13743">MEDERWKLSSSKGRSKSGRSCSSSSNYYYHSSDFNSSNATTLSRSYSASVTASRHATTAWSAAGAGGGGASSSSSSQHQHQQQQQQSNNSQRLSKKCVEAVKEHRARFYIVRRCVSMLVCWRDY</sequence>
<proteinExistence type="inferred from homology"/>
<comment type="function">
    <text evidence="5">Small polypeptide acting as a regulatory molecule which coordinates cellular responses required for differentiation, growth and development, probably by restricting polar cell proliferation in lateral organs (e.g. leaves and petioles).</text>
</comment>
<comment type="subcellular location">
    <subcellularLocation>
        <location evidence="1">Cell membrane</location>
        <topology evidence="2">Single-pass membrane protein</topology>
    </subcellularLocation>
</comment>
<comment type="similarity">
    <text evidence="7">Belongs to the DVL/RTFL small polypeptides family.</text>
</comment>
<feature type="chain" id="PRO_0000452795" description="Small polypeptide ROTUNDIFOLIA LIKE 3">
    <location>
        <begin position="1"/>
        <end position="124"/>
    </location>
</feature>
<feature type="transmembrane region" description="Helical" evidence="2">
    <location>
        <begin position="59"/>
        <end position="75"/>
    </location>
</feature>
<feature type="region of interest" description="Disordered" evidence="4">
    <location>
        <begin position="1"/>
        <end position="23"/>
    </location>
</feature>
<feature type="region of interest" description="Disordered" evidence="4">
    <location>
        <begin position="60"/>
        <end position="95"/>
    </location>
</feature>
<feature type="region of interest" description="Required for DVL/RTFL small polypeptide activity" evidence="1">
    <location>
        <begin position="92"/>
        <end position="124"/>
    </location>
</feature>
<feature type="compositionally biased region" description="Low complexity" evidence="4">
    <location>
        <begin position="71"/>
        <end position="91"/>
    </location>
</feature>
<feature type="glycosylation site" description="N-linked (GlcNAc...) asparagine" evidence="3">
    <location>
        <position position="35"/>
    </location>
</feature>
<feature type="glycosylation site" description="N-linked (GlcNAc...) asparagine" evidence="3">
    <location>
        <position position="38"/>
    </location>
</feature>
<feature type="glycosylation site" description="N-linked (GlcNAc...) asparagine" evidence="3">
    <location>
        <position position="88"/>
    </location>
</feature>
<organism>
    <name type="scientific">Oryza sativa subsp. japonica</name>
    <name type="common">Rice</name>
    <dbReference type="NCBI Taxonomy" id="39947"/>
    <lineage>
        <taxon>Eukaryota</taxon>
        <taxon>Viridiplantae</taxon>
        <taxon>Streptophyta</taxon>
        <taxon>Embryophyta</taxon>
        <taxon>Tracheophyta</taxon>
        <taxon>Spermatophyta</taxon>
        <taxon>Magnoliopsida</taxon>
        <taxon>Liliopsida</taxon>
        <taxon>Poales</taxon>
        <taxon>Poaceae</taxon>
        <taxon>BOP clade</taxon>
        <taxon>Oryzoideae</taxon>
        <taxon>Oryzeae</taxon>
        <taxon>Oryzinae</taxon>
        <taxon>Oryza</taxon>
        <taxon>Oryza sativa</taxon>
    </lineage>
</organism>